<gene>
    <name evidence="3" type="primary">pycTIR</name>
    <name type="ORF">Ga0130373_10434</name>
</gene>
<proteinExistence type="predicted"/>
<name>PCTIR_PSEAI</name>
<reference key="1">
    <citation type="submission" date="2015-03" db="EMBL/GenBank/DDBJ databases">
        <authorList>
            <person name="Weiser R."/>
        </authorList>
    </citation>
    <scope>NUCLEOTIDE SEQUENCE [LARGE SCALE GENOMIC DNA]</scope>
    <source>
        <strain>RW93</strain>
    </source>
</reference>
<reference key="2">
    <citation type="journal article" date="2021" name="Cell">
        <title>Cyclic CMP and cyclic UMP mediate bacterial immunity against phages.</title>
        <authorList>
            <person name="Tal N."/>
            <person name="Morehouse B.R."/>
            <person name="Millman A."/>
            <person name="Stokar-Avihail A."/>
            <person name="Avraham C."/>
            <person name="Fedorenko T."/>
            <person name="Yirmiya E."/>
            <person name="Herbst E."/>
            <person name="Brandis A."/>
            <person name="Mehlman T."/>
            <person name="Oppenheimer-Shaanan Y."/>
            <person name="Keszei A.F.A."/>
            <person name="Shao S."/>
            <person name="Amitai G."/>
            <person name="Kranzusch P.J."/>
            <person name="Sorek R."/>
        </authorList>
    </citation>
    <scope>PROBABLE FUNCTION</scope>
    <scope>CLASSIFICATION</scope>
    <source>
        <strain>RW93</strain>
    </source>
</reference>
<sequence>MTTGKLIDRFEGPSGRAVLEEVLLEQKLVLGNQDLARRLAEVGTLEEIAKDAVLITEDAEDSEVYFIITGHFQVKVHDREVATRGGGDHVGEMAALVPTAKRSATVLATEPSIVLKVSAADFKSIADAYPSVWRQVTRQLVDRLHQRNDMVLPAHQSSHVFIICSVEALPIARAIENNLEHDKFFVKTWTQGVFRASQYALESLEEQLDECDFAIAIAQPDDSVTMREETKNTPRDNVIFELGLFVGRLGRARTFLLEPRGDEVHLPSDLKGLTTIGYRLTKSEDQLPSSLSPACNQLRTIFNKLGPK</sequence>
<dbReference type="EC" id="3.2.2.5" evidence="1 5"/>
<dbReference type="EMBL" id="CUYG01000043">
    <property type="status" value="NOT_ANNOTATED_CDS"/>
    <property type="molecule type" value="Genomic_DNA"/>
</dbReference>
<dbReference type="RefSeq" id="WP_010562503.1">
    <property type="nucleotide sequence ID" value="NZ_WUAD01000002.1"/>
</dbReference>
<dbReference type="SMR" id="P0DV41"/>
<dbReference type="GeneID" id="78556796"/>
<dbReference type="GO" id="GO:0005737">
    <property type="term" value="C:cytoplasm"/>
    <property type="evidence" value="ECO:0007669"/>
    <property type="project" value="UniProtKB-SubCell"/>
</dbReference>
<dbReference type="GO" id="GO:0050135">
    <property type="term" value="F:NADP+ nucleosidase activity"/>
    <property type="evidence" value="ECO:0007669"/>
    <property type="project" value="InterPro"/>
</dbReference>
<dbReference type="GO" id="GO:0000166">
    <property type="term" value="F:nucleotide binding"/>
    <property type="evidence" value="ECO:0007669"/>
    <property type="project" value="UniProtKB-KW"/>
</dbReference>
<dbReference type="GO" id="GO:0051607">
    <property type="term" value="P:defense response to virus"/>
    <property type="evidence" value="ECO:0007669"/>
    <property type="project" value="UniProtKB-KW"/>
</dbReference>
<dbReference type="CDD" id="cd00038">
    <property type="entry name" value="CAP_ED"/>
    <property type="match status" value="1"/>
</dbReference>
<dbReference type="Gene3D" id="2.60.120.10">
    <property type="entry name" value="Jelly Rolls"/>
    <property type="match status" value="1"/>
</dbReference>
<dbReference type="InterPro" id="IPR019302">
    <property type="entry name" value="CAP12/PCTIR_TIR_dom"/>
</dbReference>
<dbReference type="InterPro" id="IPR000595">
    <property type="entry name" value="cNMP-bd_dom"/>
</dbReference>
<dbReference type="InterPro" id="IPR018490">
    <property type="entry name" value="cNMP-bd_dom_sf"/>
</dbReference>
<dbReference type="InterPro" id="IPR014710">
    <property type="entry name" value="RmlC-like_jellyroll"/>
</dbReference>
<dbReference type="PANTHER" id="PTHR23011">
    <property type="entry name" value="CYCLIC NUCLEOTIDE-BINDING DOMAIN CONTAINING PROTEIN"/>
    <property type="match status" value="1"/>
</dbReference>
<dbReference type="PANTHER" id="PTHR23011:SF28">
    <property type="entry name" value="CYCLIC NUCLEOTIDE-BINDING DOMAIN CONTAINING PROTEIN"/>
    <property type="match status" value="1"/>
</dbReference>
<dbReference type="Pfam" id="PF10137">
    <property type="entry name" value="CAP12-PCTIR_TIR"/>
    <property type="match status" value="1"/>
</dbReference>
<dbReference type="Pfam" id="PF00027">
    <property type="entry name" value="cNMP_binding"/>
    <property type="match status" value="1"/>
</dbReference>
<dbReference type="SMART" id="SM00100">
    <property type="entry name" value="cNMP"/>
    <property type="match status" value="1"/>
</dbReference>
<dbReference type="SUPFAM" id="SSF51206">
    <property type="entry name" value="cAMP-binding domain-like"/>
    <property type="match status" value="1"/>
</dbReference>
<dbReference type="PROSITE" id="PS50042">
    <property type="entry name" value="CNMP_BINDING_3"/>
    <property type="match status" value="1"/>
</dbReference>
<evidence type="ECO:0000250" key="1">
    <source>
        <dbReference type="UniProtKB" id="A0A0J5WTU0"/>
    </source>
</evidence>
<evidence type="ECO:0000255" key="2">
    <source>
        <dbReference type="PROSITE-ProRule" id="PRU00060"/>
    </source>
</evidence>
<evidence type="ECO:0000303" key="3">
    <source>
    </source>
</evidence>
<evidence type="ECO:0000305" key="4"/>
<evidence type="ECO:0000305" key="5">
    <source>
    </source>
</evidence>
<accession>P0DV41</accession>
<feature type="chain" id="PRO_0000455237" description="Pycsar effector protein PaPycTIR">
    <location>
        <begin position="1"/>
        <end position="308"/>
    </location>
</feature>
<feature type="region of interest" description="TIR-like" evidence="5">
    <location>
        <begin position="160"/>
        <end position="278"/>
    </location>
</feature>
<feature type="binding site" evidence="2">
    <location>
        <begin position="54"/>
        <end position="143"/>
    </location>
    <ligand>
        <name>a nucleoside 3',5'-cyclic phosphate</name>
        <dbReference type="ChEBI" id="CHEBI:58464"/>
    </ligand>
</feature>
<organism>
    <name type="scientific">Pseudomonas aeruginosa</name>
    <dbReference type="NCBI Taxonomy" id="287"/>
    <lineage>
        <taxon>Bacteria</taxon>
        <taxon>Pseudomonadati</taxon>
        <taxon>Pseudomonadota</taxon>
        <taxon>Gammaproteobacteria</taxon>
        <taxon>Pseudomonadales</taxon>
        <taxon>Pseudomonadaceae</taxon>
        <taxon>Pseudomonas</taxon>
    </lineage>
</organism>
<protein>
    <recommendedName>
        <fullName>Pycsar effector protein PaPycTIR</fullName>
        <shortName evidence="3">PaPycTIR</shortName>
        <ecNumber evidence="1 5">3.2.2.5</ecNumber>
    </recommendedName>
</protein>
<comment type="function">
    <text evidence="5">Pycsar (pyrimidine cyclase system for antiphage resistance) provides immunity against bacteriophage. The pyrimidine cyclase (PycC) synthesizes cyclic nucleotides in response to infection; these serve as specific second messenger signals. The signals activate the adjacent effector, leading to bacterial cell death and abortive phage infection. A clade A Pycsar system.</text>
</comment>
<comment type="function">
    <text evidence="5">The effector gene of a two-gene Pycsar system. Expression of this and adjacent uridylate cyclase PaPycC (AC P0DV40) probably confers resistance to bacteriophage. The genes are probably only expressed in response to bacteriophage infection. Probably only responds to cUMP (produced by its cognate NTP cyclase), acts by depleting cellular NAD(+) levels.</text>
</comment>
<comment type="catalytic activity">
    <reaction evidence="1 5">
        <text>NAD(+) + H2O = ADP-D-ribose + nicotinamide + H(+)</text>
        <dbReference type="Rhea" id="RHEA:16301"/>
        <dbReference type="ChEBI" id="CHEBI:15377"/>
        <dbReference type="ChEBI" id="CHEBI:15378"/>
        <dbReference type="ChEBI" id="CHEBI:17154"/>
        <dbReference type="ChEBI" id="CHEBI:57540"/>
        <dbReference type="ChEBI" id="CHEBI:57967"/>
        <dbReference type="EC" id="3.2.2.5"/>
    </reaction>
</comment>
<comment type="subcellular location">
    <subcellularLocation>
        <location evidence="4">Cytoplasm</location>
    </subcellularLocation>
</comment>
<comment type="domain">
    <text evidence="5">Has an N-terminal cyclic nucleotide-binding domain and a C-terminal Toll/interleukin-1 receptor-like domain (TIR) that probably has the NAD(+) hydrolase activity.</text>
</comment>
<keyword id="KW-0051">Antiviral defense</keyword>
<keyword id="KW-0963">Cytoplasm</keyword>
<keyword id="KW-0378">Hydrolase</keyword>
<keyword id="KW-0547">Nucleotide-binding</keyword>